<accession>Q3J8T6</accession>
<name>RS11_NITOC</name>
<evidence type="ECO:0000255" key="1">
    <source>
        <dbReference type="HAMAP-Rule" id="MF_01310"/>
    </source>
</evidence>
<evidence type="ECO:0000305" key="2"/>
<feature type="chain" id="PRO_0000230411" description="Small ribosomal subunit protein uS11">
    <location>
        <begin position="1"/>
        <end position="127"/>
    </location>
</feature>
<gene>
    <name evidence="1" type="primary">rpsK</name>
    <name type="ordered locus">Noc_2302</name>
</gene>
<dbReference type="EMBL" id="CP000127">
    <property type="protein sequence ID" value="ABA58760.1"/>
    <property type="molecule type" value="Genomic_DNA"/>
</dbReference>
<dbReference type="RefSeq" id="WP_011330913.1">
    <property type="nucleotide sequence ID" value="NC_007484.1"/>
</dbReference>
<dbReference type="SMR" id="Q3J8T6"/>
<dbReference type="FunCoup" id="Q3J8T6">
    <property type="interactions" value="605"/>
</dbReference>
<dbReference type="STRING" id="323261.Noc_2302"/>
<dbReference type="KEGG" id="noc:Noc_2302"/>
<dbReference type="eggNOG" id="COG0100">
    <property type="taxonomic scope" value="Bacteria"/>
</dbReference>
<dbReference type="HOGENOM" id="CLU_072439_5_0_6"/>
<dbReference type="InParanoid" id="Q3J8T6"/>
<dbReference type="Proteomes" id="UP000006838">
    <property type="component" value="Chromosome"/>
</dbReference>
<dbReference type="GO" id="GO:1990904">
    <property type="term" value="C:ribonucleoprotein complex"/>
    <property type="evidence" value="ECO:0007669"/>
    <property type="project" value="UniProtKB-KW"/>
</dbReference>
<dbReference type="GO" id="GO:0005840">
    <property type="term" value="C:ribosome"/>
    <property type="evidence" value="ECO:0007669"/>
    <property type="project" value="UniProtKB-KW"/>
</dbReference>
<dbReference type="GO" id="GO:0019843">
    <property type="term" value="F:rRNA binding"/>
    <property type="evidence" value="ECO:0007669"/>
    <property type="project" value="UniProtKB-UniRule"/>
</dbReference>
<dbReference type="GO" id="GO:0003735">
    <property type="term" value="F:structural constituent of ribosome"/>
    <property type="evidence" value="ECO:0007669"/>
    <property type="project" value="InterPro"/>
</dbReference>
<dbReference type="GO" id="GO:0006412">
    <property type="term" value="P:translation"/>
    <property type="evidence" value="ECO:0007669"/>
    <property type="project" value="UniProtKB-UniRule"/>
</dbReference>
<dbReference type="FunFam" id="3.30.420.80:FF:000001">
    <property type="entry name" value="30S ribosomal protein S11"/>
    <property type="match status" value="1"/>
</dbReference>
<dbReference type="Gene3D" id="3.30.420.80">
    <property type="entry name" value="Ribosomal protein S11"/>
    <property type="match status" value="1"/>
</dbReference>
<dbReference type="HAMAP" id="MF_01310">
    <property type="entry name" value="Ribosomal_uS11"/>
    <property type="match status" value="1"/>
</dbReference>
<dbReference type="InterPro" id="IPR001971">
    <property type="entry name" value="Ribosomal_uS11"/>
</dbReference>
<dbReference type="InterPro" id="IPR019981">
    <property type="entry name" value="Ribosomal_uS11_bac-type"/>
</dbReference>
<dbReference type="InterPro" id="IPR036967">
    <property type="entry name" value="Ribosomal_uS11_sf"/>
</dbReference>
<dbReference type="NCBIfam" id="NF003698">
    <property type="entry name" value="PRK05309.1"/>
    <property type="match status" value="1"/>
</dbReference>
<dbReference type="NCBIfam" id="TIGR03632">
    <property type="entry name" value="uS11_bact"/>
    <property type="match status" value="1"/>
</dbReference>
<dbReference type="PANTHER" id="PTHR11759">
    <property type="entry name" value="40S RIBOSOMAL PROTEIN S14/30S RIBOSOMAL PROTEIN S11"/>
    <property type="match status" value="1"/>
</dbReference>
<dbReference type="Pfam" id="PF00411">
    <property type="entry name" value="Ribosomal_S11"/>
    <property type="match status" value="1"/>
</dbReference>
<dbReference type="PIRSF" id="PIRSF002131">
    <property type="entry name" value="Ribosomal_S11"/>
    <property type="match status" value="1"/>
</dbReference>
<dbReference type="SUPFAM" id="SSF53137">
    <property type="entry name" value="Translational machinery components"/>
    <property type="match status" value="1"/>
</dbReference>
<comment type="function">
    <text evidence="1">Located on the platform of the 30S subunit, it bridges several disparate RNA helices of the 16S rRNA. Forms part of the Shine-Dalgarno cleft in the 70S ribosome.</text>
</comment>
<comment type="subunit">
    <text evidence="1">Part of the 30S ribosomal subunit. Interacts with proteins S7 and S18. Binds to IF-3.</text>
</comment>
<comment type="similarity">
    <text evidence="1">Belongs to the universal ribosomal protein uS11 family.</text>
</comment>
<protein>
    <recommendedName>
        <fullName evidence="1">Small ribosomal subunit protein uS11</fullName>
    </recommendedName>
    <alternativeName>
        <fullName evidence="2">30S ribosomal protein S11</fullName>
    </alternativeName>
</protein>
<organism>
    <name type="scientific">Nitrosococcus oceani (strain ATCC 19707 / BCRC 17464 / JCM 30415 / NCIMB 11848 / C-107)</name>
    <dbReference type="NCBI Taxonomy" id="323261"/>
    <lineage>
        <taxon>Bacteria</taxon>
        <taxon>Pseudomonadati</taxon>
        <taxon>Pseudomonadota</taxon>
        <taxon>Gammaproteobacteria</taxon>
        <taxon>Chromatiales</taxon>
        <taxon>Chromatiaceae</taxon>
        <taxon>Nitrosococcus</taxon>
    </lineage>
</organism>
<keyword id="KW-1185">Reference proteome</keyword>
<keyword id="KW-0687">Ribonucleoprotein</keyword>
<keyword id="KW-0689">Ribosomal protein</keyword>
<keyword id="KW-0694">RNA-binding</keyword>
<keyword id="KW-0699">rRNA-binding</keyword>
<reference key="1">
    <citation type="journal article" date="2006" name="Appl. Environ. Microbiol.">
        <title>Complete genome sequence of the marine, chemolithoautotrophic, ammonia-oxidizing bacterium Nitrosococcus oceani ATCC 19707.</title>
        <authorList>
            <person name="Klotz M.G."/>
            <person name="Arp D.J."/>
            <person name="Chain P.S.G."/>
            <person name="El-Sheikh A.F."/>
            <person name="Hauser L.J."/>
            <person name="Hommes N.G."/>
            <person name="Larimer F.W."/>
            <person name="Malfatti S.A."/>
            <person name="Norton J.M."/>
            <person name="Poret-Peterson A.T."/>
            <person name="Vergez L.M."/>
            <person name="Ward B.B."/>
        </authorList>
    </citation>
    <scope>NUCLEOTIDE SEQUENCE [LARGE SCALE GENOMIC DNA]</scope>
    <source>
        <strain>ATCC 19707 / BCRC 17464 / JCM 30415 / NCIMB 11848 / C-107</strain>
    </source>
</reference>
<proteinExistence type="inferred from homology"/>
<sequence>MAKTSTKKRVKRVVSDGIAHIHASFNNTIVTITDRQGNTLAWATSGGSGFRGSRKSTPFAAQVAAEKAGRIVQEMGMKNLEVRVKGPGPGRESAARSLNNVGFKVTNIADITPIPHNGCRPPKKRRV</sequence>